<dbReference type="EMBL" id="CU928170">
    <property type="protein sequence ID" value="CAR24227.1"/>
    <property type="molecule type" value="Genomic_DNA"/>
</dbReference>
<dbReference type="RefSeq" id="XP_002554664.1">
    <property type="nucleotide sequence ID" value="XM_002554618.1"/>
</dbReference>
<dbReference type="FunCoup" id="C5DL76">
    <property type="interactions" value="55"/>
</dbReference>
<dbReference type="GeneID" id="8292876"/>
<dbReference type="KEGG" id="lth:KLTH0F10648g"/>
<dbReference type="eggNOG" id="ENOG502S02E">
    <property type="taxonomic scope" value="Eukaryota"/>
</dbReference>
<dbReference type="HOGENOM" id="CLU_324433_0_0_1"/>
<dbReference type="InParanoid" id="C5DL76"/>
<dbReference type="OMA" id="DNPFRRY"/>
<dbReference type="OrthoDB" id="3973404at2759"/>
<dbReference type="Proteomes" id="UP000002036">
    <property type="component" value="Chromosome F"/>
</dbReference>
<dbReference type="GO" id="GO:0030479">
    <property type="term" value="C:actin cortical patch"/>
    <property type="evidence" value="ECO:0007669"/>
    <property type="project" value="InterPro"/>
</dbReference>
<dbReference type="GO" id="GO:0045121">
    <property type="term" value="C:membrane raft"/>
    <property type="evidence" value="ECO:0007669"/>
    <property type="project" value="UniProtKB-SubCell"/>
</dbReference>
<dbReference type="GO" id="GO:0051016">
    <property type="term" value="P:barbed-end actin filament capping"/>
    <property type="evidence" value="ECO:0007669"/>
    <property type="project" value="InterPro"/>
</dbReference>
<dbReference type="InterPro" id="IPR031370">
    <property type="entry name" value="Aim3"/>
</dbReference>
<dbReference type="Pfam" id="PF17096">
    <property type="entry name" value="AIM3"/>
    <property type="match status" value="1"/>
</dbReference>
<feature type="chain" id="PRO_0000399602" description="Altered inheritance of mitochondria protein 3">
    <location>
        <begin position="1"/>
        <end position="842"/>
    </location>
</feature>
<feature type="region of interest" description="Disordered" evidence="2">
    <location>
        <begin position="1"/>
        <end position="25"/>
    </location>
</feature>
<feature type="region of interest" description="Disordered" evidence="2">
    <location>
        <begin position="39"/>
        <end position="134"/>
    </location>
</feature>
<feature type="region of interest" description="Disordered" evidence="2">
    <location>
        <begin position="338"/>
        <end position="368"/>
    </location>
</feature>
<feature type="region of interest" description="Disordered" evidence="2">
    <location>
        <begin position="393"/>
        <end position="769"/>
    </location>
</feature>
<feature type="region of interest" description="Disordered" evidence="2">
    <location>
        <begin position="799"/>
        <end position="842"/>
    </location>
</feature>
<feature type="compositionally biased region" description="Low complexity" evidence="2">
    <location>
        <begin position="52"/>
        <end position="64"/>
    </location>
</feature>
<feature type="compositionally biased region" description="Low complexity" evidence="2">
    <location>
        <begin position="104"/>
        <end position="117"/>
    </location>
</feature>
<feature type="compositionally biased region" description="Low complexity" evidence="2">
    <location>
        <begin position="406"/>
        <end position="416"/>
    </location>
</feature>
<feature type="compositionally biased region" description="Polar residues" evidence="2">
    <location>
        <begin position="422"/>
        <end position="461"/>
    </location>
</feature>
<feature type="compositionally biased region" description="Low complexity" evidence="2">
    <location>
        <begin position="525"/>
        <end position="540"/>
    </location>
</feature>
<feature type="compositionally biased region" description="Low complexity" evidence="2">
    <location>
        <begin position="638"/>
        <end position="652"/>
    </location>
</feature>
<feature type="compositionally biased region" description="Polar residues" evidence="2">
    <location>
        <begin position="654"/>
        <end position="665"/>
    </location>
</feature>
<feature type="compositionally biased region" description="Basic residues" evidence="2">
    <location>
        <begin position="718"/>
        <end position="727"/>
    </location>
</feature>
<feature type="compositionally biased region" description="Polar residues" evidence="2">
    <location>
        <begin position="731"/>
        <end position="748"/>
    </location>
</feature>
<feature type="compositionally biased region" description="Basic and acidic residues" evidence="2">
    <location>
        <begin position="753"/>
        <end position="766"/>
    </location>
</feature>
<evidence type="ECO:0000250" key="1"/>
<evidence type="ECO:0000256" key="2">
    <source>
        <dbReference type="SAM" id="MobiDB-lite"/>
    </source>
</evidence>
<evidence type="ECO:0000305" key="3"/>
<gene>
    <name type="primary">AIM3</name>
    <name type="ordered locus">KLTH0F10648g</name>
</gene>
<organism>
    <name type="scientific">Lachancea thermotolerans (strain ATCC 56472 / CBS 6340 / NRRL Y-8284)</name>
    <name type="common">Yeast</name>
    <name type="synonym">Kluyveromyces thermotolerans</name>
    <dbReference type="NCBI Taxonomy" id="559295"/>
    <lineage>
        <taxon>Eukaryota</taxon>
        <taxon>Fungi</taxon>
        <taxon>Dikarya</taxon>
        <taxon>Ascomycota</taxon>
        <taxon>Saccharomycotina</taxon>
        <taxon>Saccharomycetes</taxon>
        <taxon>Saccharomycetales</taxon>
        <taxon>Saccharomycetaceae</taxon>
        <taxon>Lachancea</taxon>
    </lineage>
</organism>
<protein>
    <recommendedName>
        <fullName>Altered inheritance of mitochondria protein 3</fullName>
    </recommendedName>
</protein>
<reference key="1">
    <citation type="journal article" date="2009" name="Genome Res.">
        <title>Comparative genomics of protoploid Saccharomycetaceae.</title>
        <authorList>
            <consortium name="The Genolevures Consortium"/>
            <person name="Souciet J.-L."/>
            <person name="Dujon B."/>
            <person name="Gaillardin C."/>
            <person name="Johnston M."/>
            <person name="Baret P.V."/>
            <person name="Cliften P."/>
            <person name="Sherman D.J."/>
            <person name="Weissenbach J."/>
            <person name="Westhof E."/>
            <person name="Wincker P."/>
            <person name="Jubin C."/>
            <person name="Poulain J."/>
            <person name="Barbe V."/>
            <person name="Segurens B."/>
            <person name="Artiguenave F."/>
            <person name="Anthouard V."/>
            <person name="Vacherie B."/>
            <person name="Val M.-E."/>
            <person name="Fulton R.S."/>
            <person name="Minx P."/>
            <person name="Wilson R."/>
            <person name="Durrens P."/>
            <person name="Jean G."/>
            <person name="Marck C."/>
            <person name="Martin T."/>
            <person name="Nikolski M."/>
            <person name="Rolland T."/>
            <person name="Seret M.-L."/>
            <person name="Casaregola S."/>
            <person name="Despons L."/>
            <person name="Fairhead C."/>
            <person name="Fischer G."/>
            <person name="Lafontaine I."/>
            <person name="Leh V."/>
            <person name="Lemaire M."/>
            <person name="de Montigny J."/>
            <person name="Neuveglise C."/>
            <person name="Thierry A."/>
            <person name="Blanc-Lenfle I."/>
            <person name="Bleykasten C."/>
            <person name="Diffels J."/>
            <person name="Fritsch E."/>
            <person name="Frangeul L."/>
            <person name="Goeffon A."/>
            <person name="Jauniaux N."/>
            <person name="Kachouri-Lafond R."/>
            <person name="Payen C."/>
            <person name="Potier S."/>
            <person name="Pribylova L."/>
            <person name="Ozanne C."/>
            <person name="Richard G.-F."/>
            <person name="Sacerdot C."/>
            <person name="Straub M.-L."/>
            <person name="Talla E."/>
        </authorList>
    </citation>
    <scope>NUCLEOTIDE SEQUENCE [LARGE SCALE GENOMIC DNA]</scope>
    <source>
        <strain>ATCC 56472 / CBS 6340 / NRRL Y-8284</strain>
    </source>
</reference>
<comment type="subcellular location">
    <subcellularLocation>
        <location evidence="1">Membrane raft</location>
        <topology evidence="1">Peripheral membrane protein</topology>
    </subcellularLocation>
    <text evidence="1">Localizes within detergent-insoluble glycolipid-enriched membranes.</text>
</comment>
<comment type="similarity">
    <text evidence="3">Belongs to the AIM3 family.</text>
</comment>
<keyword id="KW-0472">Membrane</keyword>
<keyword id="KW-1185">Reference proteome</keyword>
<accession>C5DL76</accession>
<proteinExistence type="inferred from homology"/>
<sequence>MSDFWDRNKGSIMSGLATAGKQGYKGTKFVAKTGYKAGKQHYNSSKNKREGNSNNSSSSDLTISSPPPLTADVSNFPPPPVKPGQNQYHGSSRGGSGNVPPAATSRTSSTLPSSYSSEQNPIIPQIGNPQAVPYQVPAPVPQYTTADSQAPHIASRAATIVPGTQLPISSHPNNTAPATYNTRPVPLPHRAPDNNAAAGLVADPQLLSNTSLPRATRQLLTIDTASIATQNPNISQEAFAVPPANTMASPFPQTTHASYLAASQSPVQPESIASNKVSEPTPAVPAVPTRTYVRAPAALPVQPLPQEERQAMPQAMPQVMPQAMPQVMPQAMPQVMPQAMAQTSQPFPEENGVSDVQELKSPTSATTVKPYSWKDSEELKESLRIKIQNVDISSLPTPPVHRNRSESPSSETSSLRSKIKSRSQSPSGLKSPTQSTAVNLKTTETGKAMSTSRQTPQQTGRSSREGEGANNGIAGRYDSSVQVNFPPPPKPSRSETQTPANRDMRSSSSPPVKPTTAPRAPPRLPSRSVPSQPPVTSSVPKLSSTANGKADRENIKPKSAVSGAYNYDIKVDFQPPPKPFRKDKESSQQAPRSVPSFEKPSKYGPPPASNAETAQGRSIRAPPQIPSRAASLDPPPAYDSSHSHAPSAPPASNVELQSLSASSIQAGAEKTVKVAGSTIQIPKTKKAPPIKKALPGSLQALDTHKSNPEASAHLTEKGKKRPPKPAKKQSLMEQPNKTASNGGNSRGNFDQELEARLKSRSFHEKPAAVPSLVEHSNSFISSGKIKAAAPPVKPKIPIRLASNEALQPNEQAEVKDDSDGDNPFRRYLKNAVPSENDRLHKN</sequence>
<name>AIM3_LACTC</name>